<feature type="chain" id="PRO_0000075734" description="Filamin-binding LIM protein 1">
    <location>
        <begin position="1"/>
        <end position="375"/>
    </location>
</feature>
<feature type="domain" description="LIM zinc-binding 1" evidence="3">
    <location>
        <begin position="183"/>
        <end position="244"/>
    </location>
</feature>
<feature type="domain" description="LIM zinc-binding 2" evidence="3">
    <location>
        <begin position="245"/>
        <end position="302"/>
    </location>
</feature>
<feature type="domain" description="LIM zinc-binding 3" evidence="3">
    <location>
        <begin position="303"/>
        <end position="372"/>
    </location>
</feature>
<feature type="region of interest" description="Filamin-binding" evidence="1">
    <location>
        <begin position="1"/>
        <end position="70"/>
    </location>
</feature>
<feature type="region of interest" description="Disordered" evidence="4">
    <location>
        <begin position="43"/>
        <end position="119"/>
    </location>
</feature>
<feature type="region of interest" description="Disordered" evidence="4">
    <location>
        <begin position="137"/>
        <end position="176"/>
    </location>
</feature>
<feature type="region of interest" description="FERMT2-binding" evidence="1">
    <location>
        <begin position="278"/>
        <end position="375"/>
    </location>
</feature>
<feature type="compositionally biased region" description="Pro residues" evidence="4">
    <location>
        <begin position="104"/>
        <end position="114"/>
    </location>
</feature>
<feature type="compositionally biased region" description="Pro residues" evidence="4">
    <location>
        <begin position="140"/>
        <end position="149"/>
    </location>
</feature>
<feature type="compositionally biased region" description="Low complexity" evidence="4">
    <location>
        <begin position="150"/>
        <end position="159"/>
    </location>
</feature>
<accession>Q5REN1</accession>
<gene>
    <name type="primary">FBLIM1</name>
</gene>
<comment type="function">
    <text evidence="1">Serves as an anchoring site for cell-ECM adhesion proteins and filamin-containing actin filaments. Is implicated in cell shape modulation (spreading) and motility. May participate in the regulation of filamin-mediated cross-linking and stabilization of actin filaments. May also regulate the assembly of filamin-containing signaling complexes that control actin assembly. Promotes dissociation of FLNA from ITGB3 and ITGB7. Promotes activation of integrins and regulates integrin-mediated cell-cell adhesion (By similarity).</text>
</comment>
<comment type="subunit">
    <text evidence="1">Interacts with FERMT2, FLNA, FLNB and FLNC. Interacts with NKX2-5.</text>
</comment>
<comment type="subcellular location">
    <subcellularLocation>
        <location evidence="2">Cell junction</location>
        <location evidence="2">Focal adhesion</location>
    </subcellularLocation>
    <subcellularLocation>
        <location evidence="2">Cytoplasm</location>
        <location evidence="2">Cytoskeleton</location>
        <location evidence="2">Stress fiber</location>
    </subcellularLocation>
    <text evidence="2">Associated with actin stress fiber at cell-ECM focal adhesion sites. Recruited and localized at actin stress fibers and clustered at cell-EMC adhesion sites through interaction with FERMT2.</text>
</comment>
<keyword id="KW-0130">Cell adhesion</keyword>
<keyword id="KW-0965">Cell junction</keyword>
<keyword id="KW-0133">Cell shape</keyword>
<keyword id="KW-0963">Cytoplasm</keyword>
<keyword id="KW-0206">Cytoskeleton</keyword>
<keyword id="KW-0440">LIM domain</keyword>
<keyword id="KW-0479">Metal-binding</keyword>
<keyword id="KW-1185">Reference proteome</keyword>
<keyword id="KW-0677">Repeat</keyword>
<keyword id="KW-0862">Zinc</keyword>
<name>FBLI1_PONAB</name>
<organism>
    <name type="scientific">Pongo abelii</name>
    <name type="common">Sumatran orangutan</name>
    <name type="synonym">Pongo pygmaeus abelii</name>
    <dbReference type="NCBI Taxonomy" id="9601"/>
    <lineage>
        <taxon>Eukaryota</taxon>
        <taxon>Metazoa</taxon>
        <taxon>Chordata</taxon>
        <taxon>Craniata</taxon>
        <taxon>Vertebrata</taxon>
        <taxon>Euteleostomi</taxon>
        <taxon>Mammalia</taxon>
        <taxon>Eutheria</taxon>
        <taxon>Euarchontoglires</taxon>
        <taxon>Primates</taxon>
        <taxon>Haplorrhini</taxon>
        <taxon>Catarrhini</taxon>
        <taxon>Hominidae</taxon>
        <taxon>Pongo</taxon>
    </lineage>
</organism>
<reference key="1">
    <citation type="submission" date="2004-11" db="EMBL/GenBank/DDBJ databases">
        <authorList>
            <consortium name="The German cDNA consortium"/>
        </authorList>
    </citation>
    <scope>NUCLEOTIDE SEQUENCE [LARGE SCALE MRNA]</scope>
    <source>
        <tissue>Heart</tissue>
    </source>
</reference>
<protein>
    <recommendedName>
        <fullName>Filamin-binding LIM protein 1</fullName>
        <shortName>FBLP-1</shortName>
    </recommendedName>
</protein>
<dbReference type="EMBL" id="CR857491">
    <property type="protein sequence ID" value="CAH89776.1"/>
    <property type="molecule type" value="mRNA"/>
</dbReference>
<dbReference type="RefSeq" id="NP_001127194.1">
    <property type="nucleotide sequence ID" value="NM_001133722.1"/>
</dbReference>
<dbReference type="SMR" id="Q5REN1"/>
<dbReference type="FunCoup" id="Q5REN1">
    <property type="interactions" value="131"/>
</dbReference>
<dbReference type="STRING" id="9601.ENSPPYP00000002131"/>
<dbReference type="GeneID" id="100174248"/>
<dbReference type="KEGG" id="pon:100174248"/>
<dbReference type="CTD" id="54751"/>
<dbReference type="eggNOG" id="KOG1701">
    <property type="taxonomic scope" value="Eukaryota"/>
</dbReference>
<dbReference type="InParanoid" id="Q5REN1"/>
<dbReference type="OrthoDB" id="25414at2759"/>
<dbReference type="Proteomes" id="UP000001595">
    <property type="component" value="Unplaced"/>
</dbReference>
<dbReference type="GO" id="GO:0005737">
    <property type="term" value="C:cytoplasm"/>
    <property type="evidence" value="ECO:0007669"/>
    <property type="project" value="UniProtKB-KW"/>
</dbReference>
<dbReference type="GO" id="GO:0005925">
    <property type="term" value="C:focal adhesion"/>
    <property type="evidence" value="ECO:0007669"/>
    <property type="project" value="UniProtKB-SubCell"/>
</dbReference>
<dbReference type="GO" id="GO:0001725">
    <property type="term" value="C:stress fiber"/>
    <property type="evidence" value="ECO:0000250"/>
    <property type="project" value="UniProtKB"/>
</dbReference>
<dbReference type="GO" id="GO:0031005">
    <property type="term" value="F:filamin binding"/>
    <property type="evidence" value="ECO:0000250"/>
    <property type="project" value="UniProtKB"/>
</dbReference>
<dbReference type="GO" id="GO:0046872">
    <property type="term" value="F:metal ion binding"/>
    <property type="evidence" value="ECO:0007669"/>
    <property type="project" value="UniProtKB-KW"/>
</dbReference>
<dbReference type="GO" id="GO:0098609">
    <property type="term" value="P:cell-cell adhesion"/>
    <property type="evidence" value="ECO:0000250"/>
    <property type="project" value="UniProtKB"/>
</dbReference>
<dbReference type="GO" id="GO:0008360">
    <property type="term" value="P:regulation of cell shape"/>
    <property type="evidence" value="ECO:0007669"/>
    <property type="project" value="UniProtKB-KW"/>
</dbReference>
<dbReference type="GO" id="GO:0033623">
    <property type="term" value="P:regulation of integrin activation"/>
    <property type="evidence" value="ECO:0000250"/>
    <property type="project" value="UniProtKB"/>
</dbReference>
<dbReference type="CDD" id="cd09372">
    <property type="entry name" value="LIM2_FBLP-1"/>
    <property type="match status" value="1"/>
</dbReference>
<dbReference type="FunFam" id="2.10.110.10:FF:000086">
    <property type="entry name" value="Filamin binding LIM protein 1"/>
    <property type="match status" value="1"/>
</dbReference>
<dbReference type="FunFam" id="2.10.110.10:FF:000088">
    <property type="entry name" value="Filamin binding LIM protein 1"/>
    <property type="match status" value="1"/>
</dbReference>
<dbReference type="FunFam" id="2.10.110.10:FF:000097">
    <property type="entry name" value="Filamin-binding LIM protein 1"/>
    <property type="match status" value="1"/>
</dbReference>
<dbReference type="Gene3D" id="2.10.110.10">
    <property type="entry name" value="Cysteine Rich Protein"/>
    <property type="match status" value="3"/>
</dbReference>
<dbReference type="InterPro" id="IPR001781">
    <property type="entry name" value="Znf_LIM"/>
</dbReference>
<dbReference type="PANTHER" id="PTHR24207:SF1">
    <property type="entry name" value="FILAMIN-BINDING LIM PROTEIN 1"/>
    <property type="match status" value="1"/>
</dbReference>
<dbReference type="PANTHER" id="PTHR24207">
    <property type="entry name" value="ZYX102 PROTEIN"/>
    <property type="match status" value="1"/>
</dbReference>
<dbReference type="Pfam" id="PF00412">
    <property type="entry name" value="LIM"/>
    <property type="match status" value="3"/>
</dbReference>
<dbReference type="SMART" id="SM00132">
    <property type="entry name" value="LIM"/>
    <property type="match status" value="3"/>
</dbReference>
<dbReference type="SUPFAM" id="SSF57716">
    <property type="entry name" value="Glucocorticoid receptor-like (DNA-binding domain)"/>
    <property type="match status" value="2"/>
</dbReference>
<dbReference type="PROSITE" id="PS00478">
    <property type="entry name" value="LIM_DOMAIN_1"/>
    <property type="match status" value="3"/>
</dbReference>
<dbReference type="PROSITE" id="PS50023">
    <property type="entry name" value="LIM_DOMAIN_2"/>
    <property type="match status" value="3"/>
</dbReference>
<evidence type="ECO:0000250" key="1"/>
<evidence type="ECO:0000250" key="2">
    <source>
        <dbReference type="UniProtKB" id="Q8WUP2"/>
    </source>
</evidence>
<evidence type="ECO:0000255" key="3">
    <source>
        <dbReference type="PROSITE-ProRule" id="PRU00125"/>
    </source>
</evidence>
<evidence type="ECO:0000256" key="4">
    <source>
        <dbReference type="SAM" id="MobiDB-lite"/>
    </source>
</evidence>
<sequence>MASKPEKRVASSVFITLAPLRRDVAMAEEVRQAVCEARRGRPWEAPAPMKTPEAGLEGRPSPWTPPGRAAATVPAAPMQLSNGGCPPPPPVLDGEDALPDLDLFPPPPPPPPVLLPSEEEAPAPMGASLIADLEQLHLSPPLPPPPPQAPAERPSVQPSPLRPMEEELPPPPAERVEKGASTDICAFCHKTVSPRELAVEAMKRQYHAQCFTCRTCRRQLAGQSFYQKDGRPLCEPCYQDTLERCGKCGEVVRDHIIRALGQAFHPSCFTCVTCARCIGDESFALGSQNEVYCLDDFYRKFAPVCSICENPIIPRDGKDAFKIECMGRSFHENCYRCEDCRILLSVEPTDQGCYPLNNRLFCKPCHVKRSAAGCC</sequence>
<proteinExistence type="evidence at transcript level"/>